<feature type="chain" id="PRO_0000342160" description="Biogenesis of lysosome-related organelles complex 1 subunit 1">
    <location>
        <begin position="1"/>
        <end position="125"/>
    </location>
</feature>
<feature type="coiled-coil region" evidence="3">
    <location>
        <begin position="1"/>
        <end position="31"/>
    </location>
</feature>
<gene>
    <name type="primary">BLOC1S1</name>
</gene>
<dbReference type="EC" id="2.3.1.-" evidence="2"/>
<dbReference type="EMBL" id="BC111605">
    <property type="protein sequence ID" value="AAI11606.1"/>
    <property type="molecule type" value="mRNA"/>
</dbReference>
<dbReference type="RefSeq" id="NP_001069830.1">
    <property type="nucleotide sequence ID" value="NM_001076362.2"/>
</dbReference>
<dbReference type="SMR" id="Q2NKW0"/>
<dbReference type="FunCoup" id="Q2NKW0">
    <property type="interactions" value="1153"/>
</dbReference>
<dbReference type="STRING" id="9913.ENSBTAP00000015810"/>
<dbReference type="PaxDb" id="9913-ENSBTAP00000015810"/>
<dbReference type="GeneID" id="615149"/>
<dbReference type="KEGG" id="bta:615149"/>
<dbReference type="CTD" id="2647"/>
<dbReference type="VEuPathDB" id="HostDB:ENSBTAG00000011918"/>
<dbReference type="eggNOG" id="KOG3390">
    <property type="taxonomic scope" value="Eukaryota"/>
</dbReference>
<dbReference type="HOGENOM" id="CLU_115602_3_0_1"/>
<dbReference type="InParanoid" id="Q2NKW0"/>
<dbReference type="OMA" id="WMKIMEY"/>
<dbReference type="OrthoDB" id="20018at2759"/>
<dbReference type="TreeFam" id="TF314443"/>
<dbReference type="Reactome" id="R-BTA-432720">
    <property type="pathway name" value="Lysosome Vesicle Biogenesis"/>
</dbReference>
<dbReference type="Reactome" id="R-BTA-432722">
    <property type="pathway name" value="Golgi Associated Vesicle Biogenesis"/>
</dbReference>
<dbReference type="Proteomes" id="UP000009136">
    <property type="component" value="Chromosome 5"/>
</dbReference>
<dbReference type="Bgee" id="ENSBTAG00000011918">
    <property type="expression patterns" value="Expressed in pons and 107 other cell types or tissues"/>
</dbReference>
<dbReference type="GO" id="GO:1904115">
    <property type="term" value="C:axon cytoplasm"/>
    <property type="evidence" value="ECO:0007669"/>
    <property type="project" value="GOC"/>
</dbReference>
<dbReference type="GO" id="GO:0031083">
    <property type="term" value="C:BLOC-1 complex"/>
    <property type="evidence" value="ECO:0000250"/>
    <property type="project" value="UniProtKB"/>
</dbReference>
<dbReference type="GO" id="GO:0099078">
    <property type="term" value="C:BORC complex"/>
    <property type="evidence" value="ECO:0000250"/>
    <property type="project" value="UniProtKB"/>
</dbReference>
<dbReference type="GO" id="GO:0005829">
    <property type="term" value="C:cytosol"/>
    <property type="evidence" value="ECO:0000250"/>
    <property type="project" value="UniProtKB"/>
</dbReference>
<dbReference type="GO" id="GO:0005765">
    <property type="term" value="C:lysosomal membrane"/>
    <property type="evidence" value="ECO:0007669"/>
    <property type="project" value="UniProtKB-SubCell"/>
</dbReference>
<dbReference type="GO" id="GO:0005758">
    <property type="term" value="C:mitochondrial intermembrane space"/>
    <property type="evidence" value="ECO:0000250"/>
    <property type="project" value="UniProtKB"/>
</dbReference>
<dbReference type="GO" id="GO:0005759">
    <property type="term" value="C:mitochondrial matrix"/>
    <property type="evidence" value="ECO:0000250"/>
    <property type="project" value="UniProtKB"/>
</dbReference>
<dbReference type="GO" id="GO:0061733">
    <property type="term" value="F:protein-lysine-acetyltransferase activity"/>
    <property type="evidence" value="ECO:0000250"/>
    <property type="project" value="UniProtKB"/>
</dbReference>
<dbReference type="GO" id="GO:0009060">
    <property type="term" value="P:aerobic respiration"/>
    <property type="evidence" value="ECO:0000250"/>
    <property type="project" value="UniProtKB"/>
</dbReference>
<dbReference type="GO" id="GO:0008089">
    <property type="term" value="P:anterograde axonal transport"/>
    <property type="evidence" value="ECO:0000250"/>
    <property type="project" value="UniProtKB"/>
</dbReference>
<dbReference type="GO" id="GO:0048490">
    <property type="term" value="P:anterograde synaptic vesicle transport"/>
    <property type="evidence" value="ECO:0000250"/>
    <property type="project" value="UniProtKB"/>
</dbReference>
<dbReference type="GO" id="GO:0016197">
    <property type="term" value="P:endosomal transport"/>
    <property type="evidence" value="ECO:0000318"/>
    <property type="project" value="GO_Central"/>
</dbReference>
<dbReference type="GO" id="GO:0032418">
    <property type="term" value="P:lysosome localization"/>
    <property type="evidence" value="ECO:0000250"/>
    <property type="project" value="UniProtKB"/>
</dbReference>
<dbReference type="GO" id="GO:0031175">
    <property type="term" value="P:neuron projection development"/>
    <property type="evidence" value="ECO:0000250"/>
    <property type="project" value="UniProtKB"/>
</dbReference>
<dbReference type="GO" id="GO:0018394">
    <property type="term" value="P:peptidyl-lysine acetylation"/>
    <property type="evidence" value="ECO:0000250"/>
    <property type="project" value="UniProtKB"/>
</dbReference>
<dbReference type="InterPro" id="IPR009395">
    <property type="entry name" value="BLOC1S1"/>
</dbReference>
<dbReference type="PANTHER" id="PTHR13073:SF0">
    <property type="entry name" value="BIOGENESIS OF LYSOSOME-RELATED ORGANELLES COMPLEX 1 SUBUNIT 1"/>
    <property type="match status" value="1"/>
</dbReference>
<dbReference type="PANTHER" id="PTHR13073">
    <property type="entry name" value="BLOC-1 COMPLEX SUBUNIT 1"/>
    <property type="match status" value="1"/>
</dbReference>
<dbReference type="Pfam" id="PF06320">
    <property type="entry name" value="GCN5L1"/>
    <property type="match status" value="1"/>
</dbReference>
<reference key="1">
    <citation type="submission" date="2006-01" db="EMBL/GenBank/DDBJ databases">
        <authorList>
            <consortium name="NIH - Mammalian Gene Collection (MGC) project"/>
        </authorList>
    </citation>
    <scope>NUCLEOTIDE SEQUENCE [LARGE SCALE MRNA]</scope>
    <source>
        <strain>Hereford</strain>
        <tissue>Testis</tissue>
    </source>
</reference>
<comment type="function">
    <text evidence="2">Component of the BLOC-1 complex, a complex that is required for normal biogenesis of lysosome-related organelles (LRO), such as platelet dense granules and melanosomes. In concert with the AP-3 complex, the BLOC-1 complex is required to target membrane protein cargos into vesicles assembled at cell bodies for delivery into neurites and nerve terminals. The BLOC-1 complex, in association with SNARE proteins, is also proposed to be involved in neurite extension. As part of the BORC complex may play a role in lysosomes movement and localization at the cell periphery. The BORC complex is most probably associated with the cytosolic face of lysosomes, may recruit ARL8B and couple lysosomes to microtubule plus-end-directed kinesin motor.</text>
</comment>
<comment type="function">
    <text evidence="2">Acts as a protein acetyltransferase. Negatively regulates aerobic respiration through mitochondrial protein lysine-acetylation. May counteract the action of the deacetylase SIRT3 by acetylating and regulating proteins of the mitochondrial respiratory chain including ATP5F1A and NDUFA9. Acts as a regulator of mTORC2 signaling in response to hypotoxic stress by mediating acetylation of RICTOR, thereby protecting RICTOR against ubiquitination and subsequent degradation by the proteasome.</text>
</comment>
<comment type="catalytic activity">
    <reaction evidence="2">
        <text>L-lysyl-[protein] + acetyl-CoA = N(6)-acetyl-L-lysyl-[protein] + CoA + H(+)</text>
        <dbReference type="Rhea" id="RHEA:45948"/>
        <dbReference type="Rhea" id="RHEA-COMP:9752"/>
        <dbReference type="Rhea" id="RHEA-COMP:10731"/>
        <dbReference type="ChEBI" id="CHEBI:15378"/>
        <dbReference type="ChEBI" id="CHEBI:29969"/>
        <dbReference type="ChEBI" id="CHEBI:57287"/>
        <dbReference type="ChEBI" id="CHEBI:57288"/>
        <dbReference type="ChEBI" id="CHEBI:61930"/>
    </reaction>
    <physiologicalReaction direction="left-to-right" evidence="2">
        <dbReference type="Rhea" id="RHEA:45949"/>
    </physiologicalReaction>
</comment>
<comment type="subunit">
    <text evidence="1 2">Component of the biogenesis of lysosome-related organelles complex 1 (BLOC-1) composed of BLOC1S1, BLOC1S2, BLOC1S3, BLOC1S4, BLOC1S5, BLOC1S6, DTNBP1/BLOC1S7 and SNAPIN/BLOC1S8. Octamer composed of one copy each BLOC1S1, BLOC1S2, BLOC1S3, BLOC1S4, BLOC1S5, BLOC1S6, DTNBP1/BLOC1S7 and SNAPIN/BLOC1S8. The BLOC-1 complex associates with the AP-3 protein complex and membrane protein cargos. Component of the BLOC-one-related complex (BORC) which is composed of BLOC1S1, BLOC1S2, BORCS5, BORCS6, BORCS7, BORCS8, KXD1 and SNAPIN. Interacts with ATP5F1A and NDUFA9; involved in their acetylation on lysine residues. Interacts with KXD1.</text>
</comment>
<comment type="subcellular location">
    <subcellularLocation>
        <location evidence="2">Mitochondrion intermembrane space</location>
    </subcellularLocation>
    <subcellularLocation>
        <location evidence="2">Mitochondrion matrix</location>
    </subcellularLocation>
    <subcellularLocation>
        <location evidence="2">Cytoplasm</location>
        <location evidence="2">Cytosol</location>
    </subcellularLocation>
    <subcellularLocation>
        <location evidence="2">Lysosome membrane</location>
    </subcellularLocation>
</comment>
<comment type="similarity">
    <text evidence="4">Belongs to the BLOC1S1 family.</text>
</comment>
<sequence length="125" mass="14311">MLSRLLKEHQAKQNERKELQEKRRREAITAATCLTEALVDHLNVGVAQAYMNQRKLDHEVKTLQVQAAQFAKQTGQWIGMVENFNQALKEIGDVENWARSIELDMRTIATALEYVYKGQLQSAPS</sequence>
<name>BL1S1_BOVIN</name>
<evidence type="ECO:0000250" key="1">
    <source>
        <dbReference type="UniProtKB" id="O55102"/>
    </source>
</evidence>
<evidence type="ECO:0000250" key="2">
    <source>
        <dbReference type="UniProtKB" id="P78537"/>
    </source>
</evidence>
<evidence type="ECO:0000255" key="3"/>
<evidence type="ECO:0000305" key="4"/>
<proteinExistence type="evidence at transcript level"/>
<accession>Q2NKW0</accession>
<organism>
    <name type="scientific">Bos taurus</name>
    <name type="common">Bovine</name>
    <dbReference type="NCBI Taxonomy" id="9913"/>
    <lineage>
        <taxon>Eukaryota</taxon>
        <taxon>Metazoa</taxon>
        <taxon>Chordata</taxon>
        <taxon>Craniata</taxon>
        <taxon>Vertebrata</taxon>
        <taxon>Euteleostomi</taxon>
        <taxon>Mammalia</taxon>
        <taxon>Eutheria</taxon>
        <taxon>Laurasiatheria</taxon>
        <taxon>Artiodactyla</taxon>
        <taxon>Ruminantia</taxon>
        <taxon>Pecora</taxon>
        <taxon>Bovidae</taxon>
        <taxon>Bovinae</taxon>
        <taxon>Bos</taxon>
    </lineage>
</organism>
<keyword id="KW-0175">Coiled coil</keyword>
<keyword id="KW-0963">Cytoplasm</keyword>
<keyword id="KW-0458">Lysosome</keyword>
<keyword id="KW-0472">Membrane</keyword>
<keyword id="KW-0496">Mitochondrion</keyword>
<keyword id="KW-1185">Reference proteome</keyword>
<keyword id="KW-0808">Transferase</keyword>
<protein>
    <recommendedName>
        <fullName>Biogenesis of lysosome-related organelles complex 1 subunit 1</fullName>
        <shortName>BLOC-1 subunit 1</shortName>
    </recommendedName>
    <alternativeName>
        <fullName evidence="4">Protein acetyltransferase BLOC1S1</fullName>
        <ecNumber evidence="2">2.3.1.-</ecNumber>
    </alternativeName>
</protein>